<dbReference type="EMBL" id="AY007472">
    <property type="protein sequence ID" value="AAG12400.1"/>
    <property type="molecule type" value="Genomic_DNA"/>
</dbReference>
<dbReference type="EMBL" id="EU342371">
    <property type="protein sequence ID" value="ABY26816.1"/>
    <property type="molecule type" value="Genomic_DNA"/>
</dbReference>
<dbReference type="EMBL" id="AP009568">
    <property type="protein sequence ID" value="BAH11202.1"/>
    <property type="molecule type" value="Genomic_DNA"/>
</dbReference>
<dbReference type="RefSeq" id="YP_001876603.1">
    <property type="nucleotide sequence ID" value="NC_010654.1"/>
</dbReference>
<dbReference type="SMR" id="Q8HS09"/>
<dbReference type="GeneID" id="6276170"/>
<dbReference type="GO" id="GO:0009535">
    <property type="term" value="C:chloroplast thylakoid membrane"/>
    <property type="evidence" value="ECO:0007669"/>
    <property type="project" value="UniProtKB-SubCell"/>
</dbReference>
<dbReference type="GO" id="GO:0009539">
    <property type="term" value="C:photosystem II reaction center"/>
    <property type="evidence" value="ECO:0007669"/>
    <property type="project" value="InterPro"/>
</dbReference>
<dbReference type="GO" id="GO:0015979">
    <property type="term" value="P:photosynthesis"/>
    <property type="evidence" value="ECO:0007669"/>
    <property type="project" value="UniProtKB-UniRule"/>
</dbReference>
<dbReference type="HAMAP" id="MF_00808">
    <property type="entry name" value="PSII_PsbT"/>
    <property type="match status" value="1"/>
</dbReference>
<dbReference type="InterPro" id="IPR001743">
    <property type="entry name" value="PSII_PsbT"/>
</dbReference>
<dbReference type="InterPro" id="IPR037268">
    <property type="entry name" value="PSII_PsbT_sf"/>
</dbReference>
<dbReference type="PANTHER" id="PTHR36411">
    <property type="match status" value="1"/>
</dbReference>
<dbReference type="PANTHER" id="PTHR36411:SF2">
    <property type="entry name" value="PHOTOSYSTEM II REACTION CENTER PROTEIN T"/>
    <property type="match status" value="1"/>
</dbReference>
<dbReference type="Pfam" id="PF01405">
    <property type="entry name" value="PsbT"/>
    <property type="match status" value="1"/>
</dbReference>
<dbReference type="SUPFAM" id="SSF161029">
    <property type="entry name" value="Photosystem II reaction center protein T, PsbT"/>
    <property type="match status" value="1"/>
</dbReference>
<feature type="chain" id="PRO_0000217995" description="Photosystem II reaction center protein T">
    <location>
        <begin position="1"/>
        <end position="35"/>
    </location>
</feature>
<feature type="transmembrane region" description="Helical" evidence="1">
    <location>
        <begin position="3"/>
        <end position="23"/>
    </location>
</feature>
<comment type="function">
    <text evidence="1">Found at the monomer-monomer interface of the photosystem II (PS II) dimer, plays a role in assembly and dimerization of PSII. PSII is a light-driven water plastoquinone oxidoreductase, using light energy to abstract electrons from H(2)O, generating a proton gradient subsequently used for ATP formation.</text>
</comment>
<comment type="subunit">
    <text evidence="1">PSII is composed of 1 copy each of membrane proteins PsbA, PsbB, PsbC, PsbD, PsbE, PsbF, PsbH, PsbI, PsbJ, PsbK, PsbL, PsbM, PsbT, PsbY, PsbZ, Psb30/Ycf12, at least 3 peripheral proteins of the oxygen-evolving complex and a large number of cofactors. It forms dimeric complexes.</text>
</comment>
<comment type="subcellular location">
    <subcellularLocation>
        <location evidence="1">Plastid</location>
        <location evidence="1">Chloroplast thylakoid membrane</location>
        <topology evidence="1">Single-pass membrane protein</topology>
    </subcellularLocation>
</comment>
<comment type="similarity">
    <text evidence="1">Belongs to the PsbT family.</text>
</comment>
<keyword id="KW-0150">Chloroplast</keyword>
<keyword id="KW-0472">Membrane</keyword>
<keyword id="KW-0602">Photosynthesis</keyword>
<keyword id="KW-0604">Photosystem II</keyword>
<keyword id="KW-0934">Plastid</keyword>
<keyword id="KW-0793">Thylakoid</keyword>
<keyword id="KW-0812">Transmembrane</keyword>
<keyword id="KW-1133">Transmembrane helix</keyword>
<proteinExistence type="inferred from homology"/>
<organism>
    <name type="scientific">Welwitschia mirabilis</name>
    <name type="common">Tree tumbo</name>
    <name type="synonym">Welwitschia bainesii</name>
    <dbReference type="NCBI Taxonomy" id="3377"/>
    <lineage>
        <taxon>Eukaryota</taxon>
        <taxon>Viridiplantae</taxon>
        <taxon>Streptophyta</taxon>
        <taxon>Embryophyta</taxon>
        <taxon>Tracheophyta</taxon>
        <taxon>Spermatophyta</taxon>
        <taxon>Gnetopsida</taxon>
        <taxon>Gnetidae</taxon>
        <taxon>Welwitschiales</taxon>
        <taxon>Welwitschiaceae</taxon>
        <taxon>Welwitschia</taxon>
    </lineage>
</organism>
<gene>
    <name evidence="1" type="primary">psbT</name>
</gene>
<accession>Q8HS09</accession>
<accession>B2Y1Y6</accession>
<accession>B7ZI22</accession>
<sequence>MEALVYTFLLISTLGIIFFAIFFREPPKVPTKGGK</sequence>
<protein>
    <recommendedName>
        <fullName evidence="1">Photosystem II reaction center protein T</fullName>
        <shortName evidence="1">PSII-T</shortName>
    </recommendedName>
</protein>
<geneLocation type="chloroplast"/>
<name>PSBT_WELMI</name>
<reference key="1">
    <citation type="submission" date="2000-02" db="EMBL/GenBank/DDBJ databases">
        <title>Long branches in the seed plants and the root of the angiosperms.</title>
        <authorList>
            <person name="Graham S.W."/>
            <person name="Reeves P.A."/>
            <person name="Burns A."/>
            <person name="Olmstead R.G."/>
        </authorList>
    </citation>
    <scope>NUCLEOTIDE SEQUENCE [GENOMIC DNA]</scope>
</reference>
<reference key="2">
    <citation type="journal article" date="2008" name="BMC Evol. Biol.">
        <title>The complete plastid genome sequence of Welwitschia mirabilis: an unusually compact plastome with accelerated divergence rates.</title>
        <authorList>
            <person name="McCoy S.R."/>
            <person name="Kuehl J.V."/>
            <person name="Boore J.L."/>
            <person name="Raubeson L.A."/>
        </authorList>
    </citation>
    <scope>NUCLEOTIDE SEQUENCE [LARGE SCALE GENOMIC DNA]</scope>
</reference>
<reference key="3">
    <citation type="journal article" date="2009" name="Mol. Phylogenet. Evol.">
        <title>Evolution of reduced and compact chloroplast genomes (cpDNAs) in gnetophytes: Selection toward a lower-cost strategy.</title>
        <authorList>
            <person name="Wu C.-S."/>
            <person name="Lai Y.-T."/>
            <person name="Lin C.-P."/>
            <person name="Wang Y.-N."/>
            <person name="Chaw S.-M."/>
        </authorList>
    </citation>
    <scope>NUCLEOTIDE SEQUENCE [LARGE SCALE GENOMIC DNA]</scope>
</reference>
<evidence type="ECO:0000255" key="1">
    <source>
        <dbReference type="HAMAP-Rule" id="MF_00808"/>
    </source>
</evidence>